<accession>B2V5I6</accession>
<feature type="chain" id="PRO_1000100078" description="Dihydroorotase">
    <location>
        <begin position="1"/>
        <end position="423"/>
    </location>
</feature>
<feature type="active site" evidence="1">
    <location>
        <position position="305"/>
    </location>
</feature>
<feature type="binding site" evidence="1">
    <location>
        <position position="60"/>
    </location>
    <ligand>
        <name>Zn(2+)</name>
        <dbReference type="ChEBI" id="CHEBI:29105"/>
        <label>1</label>
    </ligand>
</feature>
<feature type="binding site" evidence="1">
    <location>
        <begin position="62"/>
        <end position="64"/>
    </location>
    <ligand>
        <name>substrate</name>
    </ligand>
</feature>
<feature type="binding site" evidence="1">
    <location>
        <position position="62"/>
    </location>
    <ligand>
        <name>Zn(2+)</name>
        <dbReference type="ChEBI" id="CHEBI:29105"/>
        <label>1</label>
    </ligand>
</feature>
<feature type="binding site" evidence="1">
    <location>
        <position position="94"/>
    </location>
    <ligand>
        <name>substrate</name>
    </ligand>
</feature>
<feature type="binding site" evidence="1">
    <location>
        <position position="152"/>
    </location>
    <ligand>
        <name>Zn(2+)</name>
        <dbReference type="ChEBI" id="CHEBI:29105"/>
        <label>1</label>
    </ligand>
</feature>
<feature type="binding site" evidence="1">
    <location>
        <position position="152"/>
    </location>
    <ligand>
        <name>Zn(2+)</name>
        <dbReference type="ChEBI" id="CHEBI:29105"/>
        <label>2</label>
    </ligand>
</feature>
<feature type="binding site" evidence="1">
    <location>
        <position position="179"/>
    </location>
    <ligand>
        <name>Zn(2+)</name>
        <dbReference type="ChEBI" id="CHEBI:29105"/>
        <label>2</label>
    </ligand>
</feature>
<feature type="binding site" evidence="1">
    <location>
        <position position="232"/>
    </location>
    <ligand>
        <name>Zn(2+)</name>
        <dbReference type="ChEBI" id="CHEBI:29105"/>
        <label>2</label>
    </ligand>
</feature>
<feature type="binding site" evidence="1">
    <location>
        <position position="305"/>
    </location>
    <ligand>
        <name>Zn(2+)</name>
        <dbReference type="ChEBI" id="CHEBI:29105"/>
        <label>1</label>
    </ligand>
</feature>
<feature type="binding site" evidence="1">
    <location>
        <position position="309"/>
    </location>
    <ligand>
        <name>substrate</name>
    </ligand>
</feature>
<feature type="binding site" evidence="1">
    <location>
        <begin position="323"/>
        <end position="324"/>
    </location>
    <ligand>
        <name>substrate</name>
    </ligand>
</feature>
<sequence length="423" mass="46638">MILIKNGHIVDPQNNLNDKFDILIEKGEIKKIEKNIQPFAGCEVIDAEGKIITPSFTDIHVHFRDPGQTYKEDIESGSKAAVAGGYTTVVCMPNTIPAIDDVPIVRYIIEKGEEIGLCRVLPSAAITKGRKGKELTEMALLKDAGAVYFTDDGAPVMDSFIMRKAMEYAGSLGTFVADHCEDLNLSQNGVAHEGEIAAALGLPPLPPEAEDTMVARDCILSIQTGMPVHICHISTKLSVEIVAWAKAMGAKVTAEVTPHHLYLTDEEFLDFSCIAKVSPPLRTHEDIEATRWALASGIIDFVATDHAPHAHYEKMQELQACPPGMLGLQFALPIVLELVKKDYFDLNRMVEVMSIQPAKKIGLKPPQIKEGEIAELTIFDPFETWEVNKETILSKSKNTPLLGRKLTGKVKYTFFKGKIVYRD</sequence>
<reference key="1">
    <citation type="journal article" date="2009" name="J. Bacteriol.">
        <title>Complete and draft genome sequences of six members of the Aquificales.</title>
        <authorList>
            <person name="Reysenbach A.-L."/>
            <person name="Hamamura N."/>
            <person name="Podar M."/>
            <person name="Griffiths E."/>
            <person name="Ferreira S."/>
            <person name="Hochstein R."/>
            <person name="Heidelberg J."/>
            <person name="Johnson J."/>
            <person name="Mead D."/>
            <person name="Pohorille A."/>
            <person name="Sarmiento M."/>
            <person name="Schweighofer K."/>
            <person name="Seshadri R."/>
            <person name="Voytek M.A."/>
        </authorList>
    </citation>
    <scope>NUCLEOTIDE SEQUENCE [LARGE SCALE GENOMIC DNA]</scope>
    <source>
        <strain>YO3AOP1</strain>
    </source>
</reference>
<gene>
    <name evidence="1" type="primary">pyrC</name>
    <name type="ordered locus">SYO3AOP1_1320</name>
</gene>
<proteinExistence type="inferred from homology"/>
<evidence type="ECO:0000255" key="1">
    <source>
        <dbReference type="HAMAP-Rule" id="MF_00220"/>
    </source>
</evidence>
<protein>
    <recommendedName>
        <fullName evidence="1">Dihydroorotase</fullName>
        <shortName evidence="1">DHOase</shortName>
        <ecNumber evidence="1">3.5.2.3</ecNumber>
    </recommendedName>
</protein>
<keyword id="KW-0378">Hydrolase</keyword>
<keyword id="KW-0479">Metal-binding</keyword>
<keyword id="KW-0665">Pyrimidine biosynthesis</keyword>
<keyword id="KW-0862">Zinc</keyword>
<comment type="function">
    <text evidence="1">Catalyzes the reversible cyclization of carbamoyl aspartate to dihydroorotate.</text>
</comment>
<comment type="catalytic activity">
    <reaction evidence="1">
        <text>(S)-dihydroorotate + H2O = N-carbamoyl-L-aspartate + H(+)</text>
        <dbReference type="Rhea" id="RHEA:24296"/>
        <dbReference type="ChEBI" id="CHEBI:15377"/>
        <dbReference type="ChEBI" id="CHEBI:15378"/>
        <dbReference type="ChEBI" id="CHEBI:30864"/>
        <dbReference type="ChEBI" id="CHEBI:32814"/>
        <dbReference type="EC" id="3.5.2.3"/>
    </reaction>
</comment>
<comment type="cofactor">
    <cofactor evidence="1">
        <name>Zn(2+)</name>
        <dbReference type="ChEBI" id="CHEBI:29105"/>
    </cofactor>
    <text evidence="1">Binds 2 Zn(2+) ions per subunit.</text>
</comment>
<comment type="pathway">
    <text evidence="1">Pyrimidine metabolism; UMP biosynthesis via de novo pathway; (S)-dihydroorotate from bicarbonate: step 3/3.</text>
</comment>
<comment type="similarity">
    <text evidence="1">Belongs to the metallo-dependent hydrolases superfamily. DHOase family. Class I DHOase subfamily.</text>
</comment>
<name>PYRC_SULSY</name>
<dbReference type="EC" id="3.5.2.3" evidence="1"/>
<dbReference type="EMBL" id="CP001080">
    <property type="protein sequence ID" value="ACD66930.1"/>
    <property type="molecule type" value="Genomic_DNA"/>
</dbReference>
<dbReference type="RefSeq" id="WP_012459989.1">
    <property type="nucleotide sequence ID" value="NC_010730.1"/>
</dbReference>
<dbReference type="SMR" id="B2V5I6"/>
<dbReference type="STRING" id="436114.SYO3AOP1_1320"/>
<dbReference type="KEGG" id="sul:SYO3AOP1_1320"/>
<dbReference type="eggNOG" id="COG0044">
    <property type="taxonomic scope" value="Bacteria"/>
</dbReference>
<dbReference type="HOGENOM" id="CLU_015572_1_0_0"/>
<dbReference type="UniPathway" id="UPA00070">
    <property type="reaction ID" value="UER00117"/>
</dbReference>
<dbReference type="GO" id="GO:0005737">
    <property type="term" value="C:cytoplasm"/>
    <property type="evidence" value="ECO:0007669"/>
    <property type="project" value="TreeGrafter"/>
</dbReference>
<dbReference type="GO" id="GO:0004038">
    <property type="term" value="F:allantoinase activity"/>
    <property type="evidence" value="ECO:0007669"/>
    <property type="project" value="TreeGrafter"/>
</dbReference>
<dbReference type="GO" id="GO:0004151">
    <property type="term" value="F:dihydroorotase activity"/>
    <property type="evidence" value="ECO:0007669"/>
    <property type="project" value="UniProtKB-UniRule"/>
</dbReference>
<dbReference type="GO" id="GO:0008270">
    <property type="term" value="F:zinc ion binding"/>
    <property type="evidence" value="ECO:0007669"/>
    <property type="project" value="UniProtKB-UniRule"/>
</dbReference>
<dbReference type="GO" id="GO:0044205">
    <property type="term" value="P:'de novo' UMP biosynthetic process"/>
    <property type="evidence" value="ECO:0007669"/>
    <property type="project" value="UniProtKB-UniRule"/>
</dbReference>
<dbReference type="GO" id="GO:0006145">
    <property type="term" value="P:purine nucleobase catabolic process"/>
    <property type="evidence" value="ECO:0007669"/>
    <property type="project" value="TreeGrafter"/>
</dbReference>
<dbReference type="CDD" id="cd01317">
    <property type="entry name" value="DHOase_IIa"/>
    <property type="match status" value="1"/>
</dbReference>
<dbReference type="Gene3D" id="3.20.20.140">
    <property type="entry name" value="Metal-dependent hydrolases"/>
    <property type="match status" value="1"/>
</dbReference>
<dbReference type="Gene3D" id="2.30.40.10">
    <property type="entry name" value="Urease, subunit C, domain 1"/>
    <property type="match status" value="1"/>
</dbReference>
<dbReference type="HAMAP" id="MF_00220_B">
    <property type="entry name" value="PyrC_classI_B"/>
    <property type="match status" value="1"/>
</dbReference>
<dbReference type="InterPro" id="IPR006680">
    <property type="entry name" value="Amidohydro-rel"/>
</dbReference>
<dbReference type="InterPro" id="IPR004722">
    <property type="entry name" value="DHOase"/>
</dbReference>
<dbReference type="InterPro" id="IPR050138">
    <property type="entry name" value="DHOase/Allantoinase_Hydrolase"/>
</dbReference>
<dbReference type="InterPro" id="IPR002195">
    <property type="entry name" value="Dihydroorotase_CS"/>
</dbReference>
<dbReference type="InterPro" id="IPR011059">
    <property type="entry name" value="Metal-dep_hydrolase_composite"/>
</dbReference>
<dbReference type="InterPro" id="IPR032466">
    <property type="entry name" value="Metal_Hydrolase"/>
</dbReference>
<dbReference type="NCBIfam" id="NF006844">
    <property type="entry name" value="PRK09357.2-5"/>
    <property type="match status" value="1"/>
</dbReference>
<dbReference type="NCBIfam" id="TIGR00857">
    <property type="entry name" value="pyrC_multi"/>
    <property type="match status" value="1"/>
</dbReference>
<dbReference type="PANTHER" id="PTHR43668">
    <property type="entry name" value="ALLANTOINASE"/>
    <property type="match status" value="1"/>
</dbReference>
<dbReference type="PANTHER" id="PTHR43668:SF2">
    <property type="entry name" value="ALLANTOINASE"/>
    <property type="match status" value="1"/>
</dbReference>
<dbReference type="Pfam" id="PF01979">
    <property type="entry name" value="Amidohydro_1"/>
    <property type="match status" value="1"/>
</dbReference>
<dbReference type="SUPFAM" id="SSF51338">
    <property type="entry name" value="Composite domain of metallo-dependent hydrolases"/>
    <property type="match status" value="1"/>
</dbReference>
<dbReference type="SUPFAM" id="SSF51556">
    <property type="entry name" value="Metallo-dependent hydrolases"/>
    <property type="match status" value="1"/>
</dbReference>
<dbReference type="PROSITE" id="PS00482">
    <property type="entry name" value="DIHYDROOROTASE_1"/>
    <property type="match status" value="1"/>
</dbReference>
<dbReference type="PROSITE" id="PS00483">
    <property type="entry name" value="DIHYDROOROTASE_2"/>
    <property type="match status" value="1"/>
</dbReference>
<organism>
    <name type="scientific">Sulfurihydrogenibium sp. (strain YO3AOP1)</name>
    <dbReference type="NCBI Taxonomy" id="436114"/>
    <lineage>
        <taxon>Bacteria</taxon>
        <taxon>Pseudomonadati</taxon>
        <taxon>Aquificota</taxon>
        <taxon>Aquificia</taxon>
        <taxon>Aquificales</taxon>
        <taxon>Hydrogenothermaceae</taxon>
        <taxon>Sulfurihydrogenibium</taxon>
    </lineage>
</organism>